<name>SLMA_ALTMD</name>
<keyword id="KW-0131">Cell cycle</keyword>
<keyword id="KW-0132">Cell division</keyword>
<keyword id="KW-0175">Coiled coil</keyword>
<keyword id="KW-0963">Cytoplasm</keyword>
<keyword id="KW-0238">DNA-binding</keyword>
<accession>F2G1U7</accession>
<organism>
    <name type="scientific">Alteromonas mediterranea (strain DSM 17117 / CIP 110805 / LMG 28347 / Deep ecotype)</name>
    <dbReference type="NCBI Taxonomy" id="1774373"/>
    <lineage>
        <taxon>Bacteria</taxon>
        <taxon>Pseudomonadati</taxon>
        <taxon>Pseudomonadota</taxon>
        <taxon>Gammaproteobacteria</taxon>
        <taxon>Alteromonadales</taxon>
        <taxon>Alteromonadaceae</taxon>
        <taxon>Alteromonas/Salinimonas group</taxon>
        <taxon>Alteromonas</taxon>
    </lineage>
</organism>
<dbReference type="EMBL" id="CP001103">
    <property type="protein sequence ID" value="AEA96194.1"/>
    <property type="molecule type" value="Genomic_DNA"/>
</dbReference>
<dbReference type="RefSeq" id="WP_012516568.1">
    <property type="nucleotide sequence ID" value="NC_011138.3"/>
</dbReference>
<dbReference type="SMR" id="F2G1U7"/>
<dbReference type="GeneID" id="56340670"/>
<dbReference type="KEGG" id="amc:MADE_1000225"/>
<dbReference type="HOGENOM" id="CLU_069356_5_0_6"/>
<dbReference type="Proteomes" id="UP000001870">
    <property type="component" value="Chromosome"/>
</dbReference>
<dbReference type="GO" id="GO:0043590">
    <property type="term" value="C:bacterial nucleoid"/>
    <property type="evidence" value="ECO:0007669"/>
    <property type="project" value="UniProtKB-UniRule"/>
</dbReference>
<dbReference type="GO" id="GO:0005737">
    <property type="term" value="C:cytoplasm"/>
    <property type="evidence" value="ECO:0007669"/>
    <property type="project" value="UniProtKB-UniRule"/>
</dbReference>
<dbReference type="GO" id="GO:0043565">
    <property type="term" value="F:sequence-specific DNA binding"/>
    <property type="evidence" value="ECO:0007669"/>
    <property type="project" value="UniProtKB-UniRule"/>
</dbReference>
<dbReference type="GO" id="GO:0051301">
    <property type="term" value="P:cell division"/>
    <property type="evidence" value="ECO:0007669"/>
    <property type="project" value="UniProtKB-KW"/>
</dbReference>
<dbReference type="GO" id="GO:0010974">
    <property type="term" value="P:negative regulation of division septum assembly"/>
    <property type="evidence" value="ECO:0007669"/>
    <property type="project" value="InterPro"/>
</dbReference>
<dbReference type="Gene3D" id="1.10.357.10">
    <property type="entry name" value="Tetracycline Repressor, domain 2"/>
    <property type="match status" value="1"/>
</dbReference>
<dbReference type="HAMAP" id="MF_01839">
    <property type="entry name" value="NO_factor_SlmA"/>
    <property type="match status" value="1"/>
</dbReference>
<dbReference type="InterPro" id="IPR009057">
    <property type="entry name" value="Homeodomain-like_sf"/>
</dbReference>
<dbReference type="InterPro" id="IPR050624">
    <property type="entry name" value="HTH-type_Tx_Regulator"/>
</dbReference>
<dbReference type="InterPro" id="IPR001647">
    <property type="entry name" value="HTH_TetR"/>
</dbReference>
<dbReference type="InterPro" id="IPR023769">
    <property type="entry name" value="NO_SlmA"/>
</dbReference>
<dbReference type="InterPro" id="IPR054580">
    <property type="entry name" value="SlmA-like_C"/>
</dbReference>
<dbReference type="NCBIfam" id="NF007015">
    <property type="entry name" value="PRK09480.1"/>
    <property type="match status" value="1"/>
</dbReference>
<dbReference type="PANTHER" id="PTHR43479">
    <property type="entry name" value="ACREF/ENVCD OPERON REPRESSOR-RELATED"/>
    <property type="match status" value="1"/>
</dbReference>
<dbReference type="PANTHER" id="PTHR43479:SF11">
    <property type="entry name" value="ACREF_ENVCD OPERON REPRESSOR-RELATED"/>
    <property type="match status" value="1"/>
</dbReference>
<dbReference type="Pfam" id="PF22276">
    <property type="entry name" value="SlmA-like_C"/>
    <property type="match status" value="1"/>
</dbReference>
<dbReference type="Pfam" id="PF00440">
    <property type="entry name" value="TetR_N"/>
    <property type="match status" value="1"/>
</dbReference>
<dbReference type="SUPFAM" id="SSF46689">
    <property type="entry name" value="Homeodomain-like"/>
    <property type="match status" value="1"/>
</dbReference>
<dbReference type="PROSITE" id="PS50977">
    <property type="entry name" value="HTH_TETR_2"/>
    <property type="match status" value="1"/>
</dbReference>
<evidence type="ECO:0000255" key="1">
    <source>
        <dbReference type="HAMAP-Rule" id="MF_01839"/>
    </source>
</evidence>
<protein>
    <recommendedName>
        <fullName evidence="1">Nucleoid occlusion factor SlmA</fullName>
    </recommendedName>
</protein>
<reference key="1">
    <citation type="journal article" date="2008" name="ISME J.">
        <title>Comparative genomics of two ecotypes of the marine planktonic copiotroph Alteromonas macleodii suggests alternative lifestyles associated with different kinds of particulate organic matter.</title>
        <authorList>
            <person name="Ivars-Martinez E."/>
            <person name="Martin-Cuadrado A.-B."/>
            <person name="D'Auria G."/>
            <person name="Mira A."/>
            <person name="Ferriera S."/>
            <person name="Johnson J."/>
            <person name="Friedman R."/>
            <person name="Rodriguez-Valera F."/>
        </authorList>
    </citation>
    <scope>NUCLEOTIDE SEQUENCE [LARGE SCALE GENOMIC DNA]</scope>
    <source>
        <strain>DSM 17117 / CIP 110805 / LMG 28347 / Deep ecotype</strain>
    </source>
</reference>
<proteinExistence type="inferred from homology"/>
<sequence length="195" mass="22316">MPAVKKTNRRAQILQALAGMLETSPGQRITTAKLAEKVGVSEAALYRHFPSKARMFEGLIEFIEETLFTRINKIVNEEKDSLTRCQLILHLILGFAEKNPGITRILNGDALMGEQDRLRARIAKLFERLETQLKQVLRERKLREGKTLSADEAIIANMMICYTDGRINGFIRSGFTRKPTEQFNEQWAAFKQMFV</sequence>
<feature type="chain" id="PRO_0000413756" description="Nucleoid occlusion factor SlmA">
    <location>
        <begin position="1"/>
        <end position="195"/>
    </location>
</feature>
<feature type="domain" description="HTH tetR-type" evidence="1">
    <location>
        <begin position="7"/>
        <end position="67"/>
    </location>
</feature>
<feature type="DNA-binding region" description="H-T-H motif" evidence="1">
    <location>
        <begin position="30"/>
        <end position="49"/>
    </location>
</feature>
<feature type="coiled-coil region" evidence="1">
    <location>
        <begin position="109"/>
        <end position="141"/>
    </location>
</feature>
<comment type="function">
    <text evidence="1">Required for nucleoid occlusion (NO) phenomenon, which prevents Z-ring formation and cell division over the nucleoid. Acts as a DNA-associated cell division inhibitor that binds simultaneously chromosomal DNA and FtsZ, and disrupts the assembly of FtsZ polymers. SlmA-DNA-binding sequences (SBS) are dispersed on non-Ter regions of the chromosome, preventing FtsZ polymerization at these regions.</text>
</comment>
<comment type="subunit">
    <text evidence="1">Homodimer. Interacts with FtsZ.</text>
</comment>
<comment type="subcellular location">
    <subcellularLocation>
        <location evidence="1">Cytoplasm</location>
        <location evidence="1">Nucleoid</location>
    </subcellularLocation>
</comment>
<comment type="similarity">
    <text evidence="1">Belongs to the nucleoid occlusion factor SlmA family.</text>
</comment>
<gene>
    <name evidence="1" type="primary">slmA</name>
    <name type="ordered locus">MADE_1000225</name>
</gene>